<feature type="chain" id="PRO_1000018931" description="Bifunctional purine biosynthesis protein PurH">
    <location>
        <begin position="1"/>
        <end position="517"/>
    </location>
</feature>
<feature type="domain" description="MGS-like" evidence="2">
    <location>
        <begin position="1"/>
        <end position="146"/>
    </location>
</feature>
<protein>
    <recommendedName>
        <fullName evidence="1">Bifunctional purine biosynthesis protein PurH</fullName>
    </recommendedName>
    <domain>
        <recommendedName>
            <fullName evidence="1">Phosphoribosylaminoimidazolecarboxamide formyltransferase</fullName>
            <ecNumber evidence="1">2.1.2.3</ecNumber>
        </recommendedName>
        <alternativeName>
            <fullName evidence="1">AICAR transformylase</fullName>
        </alternativeName>
    </domain>
    <domain>
        <recommendedName>
            <fullName evidence="1">IMP cyclohydrolase</fullName>
            <ecNumber evidence="1">3.5.4.10</ecNumber>
        </recommendedName>
        <alternativeName>
            <fullName evidence="1">ATIC</fullName>
        </alternativeName>
        <alternativeName>
            <fullName evidence="1">IMP synthase</fullName>
        </alternativeName>
        <alternativeName>
            <fullName evidence="1">Inosinicase</fullName>
        </alternativeName>
    </domain>
</protein>
<comment type="catalytic activity">
    <reaction evidence="1">
        <text>(6R)-10-formyltetrahydrofolate + 5-amino-1-(5-phospho-beta-D-ribosyl)imidazole-4-carboxamide = 5-formamido-1-(5-phospho-D-ribosyl)imidazole-4-carboxamide + (6S)-5,6,7,8-tetrahydrofolate</text>
        <dbReference type="Rhea" id="RHEA:22192"/>
        <dbReference type="ChEBI" id="CHEBI:57453"/>
        <dbReference type="ChEBI" id="CHEBI:58467"/>
        <dbReference type="ChEBI" id="CHEBI:58475"/>
        <dbReference type="ChEBI" id="CHEBI:195366"/>
        <dbReference type="EC" id="2.1.2.3"/>
    </reaction>
</comment>
<comment type="catalytic activity">
    <reaction evidence="1">
        <text>IMP + H2O = 5-formamido-1-(5-phospho-D-ribosyl)imidazole-4-carboxamide</text>
        <dbReference type="Rhea" id="RHEA:18445"/>
        <dbReference type="ChEBI" id="CHEBI:15377"/>
        <dbReference type="ChEBI" id="CHEBI:58053"/>
        <dbReference type="ChEBI" id="CHEBI:58467"/>
        <dbReference type="EC" id="3.5.4.10"/>
    </reaction>
</comment>
<comment type="pathway">
    <text evidence="1">Purine metabolism; IMP biosynthesis via de novo pathway; 5-formamido-1-(5-phospho-D-ribosyl)imidazole-4-carboxamide from 5-amino-1-(5-phospho-D-ribosyl)imidazole-4-carboxamide (10-formyl THF route): step 1/1.</text>
</comment>
<comment type="pathway">
    <text evidence="1">Purine metabolism; IMP biosynthesis via de novo pathway; IMP from 5-formamido-1-(5-phospho-D-ribosyl)imidazole-4-carboxamide: step 1/1.</text>
</comment>
<comment type="domain">
    <text evidence="1">The IMP cyclohydrolase activity resides in the N-terminal region.</text>
</comment>
<comment type="similarity">
    <text evidence="1">Belongs to the PurH family.</text>
</comment>
<sequence length="517" mass="55196">MAPIALLSVSNKHGIVPLAESLHRMHGFQLLSSGGTAKVLEDAGLPVTRVAEHTGAAEILGGRVKTLHPRVHGGILAMRGDPDHEVDLEQHQIPPIDVVVVNLYPFRETVANPQVSWETAIENIDIGGPAMVRAAAKNHAHVAVLTRPDQYDRFLVALSDGVDDQLRRELALEAFEHTAAYDVAISHWMGERLTEQASQWLEAIPLRQRLRYGENPHQHAAWYSAPQQGWGGAIQLQGKELSTNNLLDLEAALATVREFGYGTEGAQQAVQDAAVVVKHTNPCGVAIGTGVASALSRALDADRVSAFGGIVALNGLVDATTARELTSLFLECVVAPGFEPEAREILATKANLRLLELAPGAIDAAGRDHIRTILGGVLVQDQDDQSIDPTSWTVASKRSPNAEENADLTFAWRLVRHVRSNAIVVARAGQSLGVGAGQMNRVGSARLALEAAGDQARGAVLASDGFFPFDDTVRLAANHGICAVIQPGGSKRDADSIAVCDDFGLAMVLTGKRHFLH</sequence>
<accession>Q7TUM7</accession>
<keyword id="KW-0378">Hydrolase</keyword>
<keyword id="KW-0511">Multifunctional enzyme</keyword>
<keyword id="KW-0658">Purine biosynthesis</keyword>
<keyword id="KW-1185">Reference proteome</keyword>
<keyword id="KW-0808">Transferase</keyword>
<dbReference type="EC" id="2.1.2.3" evidence="1"/>
<dbReference type="EC" id="3.5.4.10" evidence="1"/>
<dbReference type="EMBL" id="BX548175">
    <property type="protein sequence ID" value="CAE22032.1"/>
    <property type="molecule type" value="Genomic_DNA"/>
</dbReference>
<dbReference type="RefSeq" id="WP_011131224.1">
    <property type="nucleotide sequence ID" value="NC_005071.1"/>
</dbReference>
<dbReference type="SMR" id="Q7TUM7"/>
<dbReference type="KEGG" id="pmt:PMT_1857"/>
<dbReference type="eggNOG" id="COG0138">
    <property type="taxonomic scope" value="Bacteria"/>
</dbReference>
<dbReference type="HOGENOM" id="CLU_016316_5_2_3"/>
<dbReference type="OrthoDB" id="9802065at2"/>
<dbReference type="UniPathway" id="UPA00074">
    <property type="reaction ID" value="UER00133"/>
</dbReference>
<dbReference type="UniPathway" id="UPA00074">
    <property type="reaction ID" value="UER00135"/>
</dbReference>
<dbReference type="Proteomes" id="UP000001423">
    <property type="component" value="Chromosome"/>
</dbReference>
<dbReference type="GO" id="GO:0005829">
    <property type="term" value="C:cytosol"/>
    <property type="evidence" value="ECO:0007669"/>
    <property type="project" value="TreeGrafter"/>
</dbReference>
<dbReference type="GO" id="GO:0003937">
    <property type="term" value="F:IMP cyclohydrolase activity"/>
    <property type="evidence" value="ECO:0007669"/>
    <property type="project" value="UniProtKB-UniRule"/>
</dbReference>
<dbReference type="GO" id="GO:0004643">
    <property type="term" value="F:phosphoribosylaminoimidazolecarboxamide formyltransferase activity"/>
    <property type="evidence" value="ECO:0007669"/>
    <property type="project" value="UniProtKB-UniRule"/>
</dbReference>
<dbReference type="GO" id="GO:0006189">
    <property type="term" value="P:'de novo' IMP biosynthetic process"/>
    <property type="evidence" value="ECO:0007669"/>
    <property type="project" value="UniProtKB-UniRule"/>
</dbReference>
<dbReference type="CDD" id="cd01421">
    <property type="entry name" value="IMPCH"/>
    <property type="match status" value="1"/>
</dbReference>
<dbReference type="FunFam" id="3.40.140.20:FF:000001">
    <property type="entry name" value="Bifunctional purine biosynthesis protein PurH"/>
    <property type="match status" value="1"/>
</dbReference>
<dbReference type="FunFam" id="3.40.50.1380:FF:000001">
    <property type="entry name" value="Bifunctional purine biosynthesis protein PurH"/>
    <property type="match status" value="1"/>
</dbReference>
<dbReference type="Gene3D" id="3.40.140.20">
    <property type="match status" value="2"/>
</dbReference>
<dbReference type="Gene3D" id="3.40.50.1380">
    <property type="entry name" value="Methylglyoxal synthase-like domain"/>
    <property type="match status" value="1"/>
</dbReference>
<dbReference type="HAMAP" id="MF_00139">
    <property type="entry name" value="PurH"/>
    <property type="match status" value="1"/>
</dbReference>
<dbReference type="InterPro" id="IPR024051">
    <property type="entry name" value="AICAR_Tfase_dup_dom_sf"/>
</dbReference>
<dbReference type="InterPro" id="IPR016193">
    <property type="entry name" value="Cytidine_deaminase-like"/>
</dbReference>
<dbReference type="InterPro" id="IPR011607">
    <property type="entry name" value="MGS-like_dom"/>
</dbReference>
<dbReference type="InterPro" id="IPR036914">
    <property type="entry name" value="MGS-like_dom_sf"/>
</dbReference>
<dbReference type="InterPro" id="IPR002695">
    <property type="entry name" value="PurH-like"/>
</dbReference>
<dbReference type="NCBIfam" id="NF002049">
    <property type="entry name" value="PRK00881.1"/>
    <property type="match status" value="1"/>
</dbReference>
<dbReference type="NCBIfam" id="TIGR00355">
    <property type="entry name" value="purH"/>
    <property type="match status" value="1"/>
</dbReference>
<dbReference type="PANTHER" id="PTHR11692:SF0">
    <property type="entry name" value="BIFUNCTIONAL PURINE BIOSYNTHESIS PROTEIN ATIC"/>
    <property type="match status" value="1"/>
</dbReference>
<dbReference type="PANTHER" id="PTHR11692">
    <property type="entry name" value="BIFUNCTIONAL PURINE BIOSYNTHESIS PROTEIN PURH"/>
    <property type="match status" value="1"/>
</dbReference>
<dbReference type="Pfam" id="PF01808">
    <property type="entry name" value="AICARFT_IMPCHas"/>
    <property type="match status" value="1"/>
</dbReference>
<dbReference type="Pfam" id="PF02142">
    <property type="entry name" value="MGS"/>
    <property type="match status" value="1"/>
</dbReference>
<dbReference type="PIRSF" id="PIRSF000414">
    <property type="entry name" value="AICARFT_IMPCHas"/>
    <property type="match status" value="1"/>
</dbReference>
<dbReference type="SMART" id="SM00798">
    <property type="entry name" value="AICARFT_IMPCHas"/>
    <property type="match status" value="1"/>
</dbReference>
<dbReference type="SMART" id="SM00851">
    <property type="entry name" value="MGS"/>
    <property type="match status" value="1"/>
</dbReference>
<dbReference type="SUPFAM" id="SSF53927">
    <property type="entry name" value="Cytidine deaminase-like"/>
    <property type="match status" value="1"/>
</dbReference>
<dbReference type="SUPFAM" id="SSF52335">
    <property type="entry name" value="Methylglyoxal synthase-like"/>
    <property type="match status" value="1"/>
</dbReference>
<dbReference type="PROSITE" id="PS51855">
    <property type="entry name" value="MGS"/>
    <property type="match status" value="1"/>
</dbReference>
<gene>
    <name evidence="1" type="primary">purH</name>
    <name type="ordered locus">PMT_1857</name>
</gene>
<reference key="1">
    <citation type="journal article" date="2003" name="Nature">
        <title>Genome divergence in two Prochlorococcus ecotypes reflects oceanic niche differentiation.</title>
        <authorList>
            <person name="Rocap G."/>
            <person name="Larimer F.W."/>
            <person name="Lamerdin J.E."/>
            <person name="Malfatti S."/>
            <person name="Chain P."/>
            <person name="Ahlgren N.A."/>
            <person name="Arellano A."/>
            <person name="Coleman M."/>
            <person name="Hauser L."/>
            <person name="Hess W.R."/>
            <person name="Johnson Z.I."/>
            <person name="Land M.L."/>
            <person name="Lindell D."/>
            <person name="Post A.F."/>
            <person name="Regala W."/>
            <person name="Shah M."/>
            <person name="Shaw S.L."/>
            <person name="Steglich C."/>
            <person name="Sullivan M.B."/>
            <person name="Ting C.S."/>
            <person name="Tolonen A."/>
            <person name="Webb E.A."/>
            <person name="Zinser E.R."/>
            <person name="Chisholm S.W."/>
        </authorList>
    </citation>
    <scope>NUCLEOTIDE SEQUENCE [LARGE SCALE GENOMIC DNA]</scope>
    <source>
        <strain>MIT 9313</strain>
    </source>
</reference>
<proteinExistence type="inferred from homology"/>
<evidence type="ECO:0000255" key="1">
    <source>
        <dbReference type="HAMAP-Rule" id="MF_00139"/>
    </source>
</evidence>
<evidence type="ECO:0000255" key="2">
    <source>
        <dbReference type="PROSITE-ProRule" id="PRU01202"/>
    </source>
</evidence>
<name>PUR9_PROMM</name>
<organism>
    <name type="scientific">Prochlorococcus marinus (strain MIT 9313)</name>
    <dbReference type="NCBI Taxonomy" id="74547"/>
    <lineage>
        <taxon>Bacteria</taxon>
        <taxon>Bacillati</taxon>
        <taxon>Cyanobacteriota</taxon>
        <taxon>Cyanophyceae</taxon>
        <taxon>Synechococcales</taxon>
        <taxon>Prochlorococcaceae</taxon>
        <taxon>Prochlorococcus</taxon>
    </lineage>
</organism>